<sequence>MDYKEQSHIIPTYKRFDIVLEKGQGVYLFDDKAKKYLDFSSGIGVCALGYNHAKFNAKIKAQVDKLLHTSNLYYNENIAAAAKNLAKASALERVFFTNSGTESIEGAMKTARKYAFNKGVKGGQFIAFKHSFHGRTLGALSLTANEKYQKPFKPLISGVKFAKYNDISSVEKLVNEKTCAIILESVQGEGGINPANKDFYKALRKLCDEKDILLIADEIQCGMGRSGKFFAYEHAQILPDIMTSAKALGCGLSVGAFVINQKVASNSLEAGDHGSTYGGNPLVCAGVNAVFEIFKEEKILENVNKLTPYLEQSLDELINEFDFCKKRKGLGFMQGLSLDKSVKVAKVIQKCQENALLLISCGENDLRFLPPLILQKEHIDEMSEKLRKALKSF</sequence>
<evidence type="ECO:0000255" key="1">
    <source>
        <dbReference type="HAMAP-Rule" id="MF_01107"/>
    </source>
</evidence>
<evidence type="ECO:0000305" key="2"/>
<evidence type="ECO:0007829" key="3">
    <source>
        <dbReference type="PDB" id="3NX3"/>
    </source>
</evidence>
<proteinExistence type="evidence at protein level"/>
<dbReference type="EC" id="2.6.1.11" evidence="1"/>
<dbReference type="EMBL" id="AL111168">
    <property type="protein sequence ID" value="CAL34382.1"/>
    <property type="status" value="ALT_INIT"/>
    <property type="molecule type" value="Genomic_DNA"/>
</dbReference>
<dbReference type="EMBL" id="AF093219">
    <property type="protein sequence ID" value="AAF21805.1"/>
    <property type="status" value="ALT_INIT"/>
    <property type="molecule type" value="Genomic_DNA"/>
</dbReference>
<dbReference type="PIR" id="C81440">
    <property type="entry name" value="C81440"/>
</dbReference>
<dbReference type="RefSeq" id="YP_002343670.1">
    <property type="nucleotide sequence ID" value="NC_002163.1"/>
</dbReference>
<dbReference type="PDB" id="3NX3">
    <property type="method" value="X-ray"/>
    <property type="resolution" value="1.80 A"/>
    <property type="chains" value="A/B=1-393"/>
</dbReference>
<dbReference type="PDBsum" id="3NX3"/>
<dbReference type="SMR" id="Q9PIR7"/>
<dbReference type="IntAct" id="Q9PIR7">
    <property type="interactions" value="12"/>
</dbReference>
<dbReference type="STRING" id="192222.Cj0227"/>
<dbReference type="PaxDb" id="192222-Cj0227"/>
<dbReference type="EnsemblBacteria" id="CAL34382">
    <property type="protein sequence ID" value="CAL34382"/>
    <property type="gene ID" value="Cj0227"/>
</dbReference>
<dbReference type="GeneID" id="904555"/>
<dbReference type="KEGG" id="cje:Cj0227"/>
<dbReference type="PATRIC" id="fig|192222.6.peg.221"/>
<dbReference type="eggNOG" id="COG4992">
    <property type="taxonomic scope" value="Bacteria"/>
</dbReference>
<dbReference type="HOGENOM" id="CLU_016922_10_1_7"/>
<dbReference type="OrthoDB" id="9801834at2"/>
<dbReference type="UniPathway" id="UPA00068">
    <property type="reaction ID" value="UER00109"/>
</dbReference>
<dbReference type="EvolutionaryTrace" id="Q9PIR7"/>
<dbReference type="Proteomes" id="UP000000799">
    <property type="component" value="Chromosome"/>
</dbReference>
<dbReference type="GO" id="GO:0005737">
    <property type="term" value="C:cytoplasm"/>
    <property type="evidence" value="ECO:0007669"/>
    <property type="project" value="UniProtKB-SubCell"/>
</dbReference>
<dbReference type="GO" id="GO:0042802">
    <property type="term" value="F:identical protein binding"/>
    <property type="evidence" value="ECO:0007669"/>
    <property type="project" value="TreeGrafter"/>
</dbReference>
<dbReference type="GO" id="GO:0003992">
    <property type="term" value="F:N2-acetyl-L-ornithine:2-oxoglutarate 5-aminotransferase activity"/>
    <property type="evidence" value="ECO:0007669"/>
    <property type="project" value="UniProtKB-UniRule"/>
</dbReference>
<dbReference type="GO" id="GO:0030170">
    <property type="term" value="F:pyridoxal phosphate binding"/>
    <property type="evidence" value="ECO:0007669"/>
    <property type="project" value="InterPro"/>
</dbReference>
<dbReference type="GO" id="GO:0006526">
    <property type="term" value="P:L-arginine biosynthetic process"/>
    <property type="evidence" value="ECO:0007669"/>
    <property type="project" value="UniProtKB-UniRule"/>
</dbReference>
<dbReference type="CDD" id="cd00610">
    <property type="entry name" value="OAT_like"/>
    <property type="match status" value="1"/>
</dbReference>
<dbReference type="FunFam" id="3.40.640.10:FF:000004">
    <property type="entry name" value="Acetylornithine aminotransferase"/>
    <property type="match status" value="1"/>
</dbReference>
<dbReference type="Gene3D" id="3.90.1150.10">
    <property type="entry name" value="Aspartate Aminotransferase, domain 1"/>
    <property type="match status" value="1"/>
</dbReference>
<dbReference type="Gene3D" id="3.40.640.10">
    <property type="entry name" value="Type I PLP-dependent aspartate aminotransferase-like (Major domain)"/>
    <property type="match status" value="1"/>
</dbReference>
<dbReference type="HAMAP" id="MF_01107">
    <property type="entry name" value="ArgD_aminotrans_3"/>
    <property type="match status" value="1"/>
</dbReference>
<dbReference type="InterPro" id="IPR004636">
    <property type="entry name" value="AcOrn/SuccOrn_fam"/>
</dbReference>
<dbReference type="InterPro" id="IPR005814">
    <property type="entry name" value="Aminotrans_3"/>
</dbReference>
<dbReference type="InterPro" id="IPR049704">
    <property type="entry name" value="Aminotrans_3_PPA_site"/>
</dbReference>
<dbReference type="InterPro" id="IPR050103">
    <property type="entry name" value="Class-III_PLP-dep_AT"/>
</dbReference>
<dbReference type="InterPro" id="IPR015424">
    <property type="entry name" value="PyrdxlP-dep_Trfase"/>
</dbReference>
<dbReference type="InterPro" id="IPR015421">
    <property type="entry name" value="PyrdxlP-dep_Trfase_major"/>
</dbReference>
<dbReference type="InterPro" id="IPR015422">
    <property type="entry name" value="PyrdxlP-dep_Trfase_small"/>
</dbReference>
<dbReference type="NCBIfam" id="TIGR00707">
    <property type="entry name" value="argD"/>
    <property type="match status" value="1"/>
</dbReference>
<dbReference type="NCBIfam" id="NF002325">
    <property type="entry name" value="PRK01278.1"/>
    <property type="match status" value="1"/>
</dbReference>
<dbReference type="PANTHER" id="PTHR11986:SF79">
    <property type="entry name" value="ACETYLORNITHINE AMINOTRANSFERASE, MITOCHONDRIAL"/>
    <property type="match status" value="1"/>
</dbReference>
<dbReference type="PANTHER" id="PTHR11986">
    <property type="entry name" value="AMINOTRANSFERASE CLASS III"/>
    <property type="match status" value="1"/>
</dbReference>
<dbReference type="Pfam" id="PF00202">
    <property type="entry name" value="Aminotran_3"/>
    <property type="match status" value="1"/>
</dbReference>
<dbReference type="PIRSF" id="PIRSF000521">
    <property type="entry name" value="Transaminase_4ab_Lys_Orn"/>
    <property type="match status" value="1"/>
</dbReference>
<dbReference type="SUPFAM" id="SSF53383">
    <property type="entry name" value="PLP-dependent transferases"/>
    <property type="match status" value="1"/>
</dbReference>
<dbReference type="PROSITE" id="PS00600">
    <property type="entry name" value="AA_TRANSFER_CLASS_3"/>
    <property type="match status" value="1"/>
</dbReference>
<organism>
    <name type="scientific">Campylobacter jejuni subsp. jejuni serotype O:2 (strain ATCC 700819 / NCTC 11168)</name>
    <dbReference type="NCBI Taxonomy" id="192222"/>
    <lineage>
        <taxon>Bacteria</taxon>
        <taxon>Pseudomonadati</taxon>
        <taxon>Campylobacterota</taxon>
        <taxon>Epsilonproteobacteria</taxon>
        <taxon>Campylobacterales</taxon>
        <taxon>Campylobacteraceae</taxon>
        <taxon>Campylobacter</taxon>
    </lineage>
</organism>
<keyword id="KW-0002">3D-structure</keyword>
<keyword id="KW-0028">Amino-acid biosynthesis</keyword>
<keyword id="KW-0032">Aminotransferase</keyword>
<keyword id="KW-0055">Arginine biosynthesis</keyword>
<keyword id="KW-0963">Cytoplasm</keyword>
<keyword id="KW-0663">Pyridoxal phosphate</keyword>
<keyword id="KW-1185">Reference proteome</keyword>
<keyword id="KW-0808">Transferase</keyword>
<comment type="catalytic activity">
    <reaction evidence="1">
        <text>N(2)-acetyl-L-ornithine + 2-oxoglutarate = N-acetyl-L-glutamate 5-semialdehyde + L-glutamate</text>
        <dbReference type="Rhea" id="RHEA:18049"/>
        <dbReference type="ChEBI" id="CHEBI:16810"/>
        <dbReference type="ChEBI" id="CHEBI:29123"/>
        <dbReference type="ChEBI" id="CHEBI:29985"/>
        <dbReference type="ChEBI" id="CHEBI:57805"/>
        <dbReference type="EC" id="2.6.1.11"/>
    </reaction>
</comment>
<comment type="cofactor">
    <cofactor evidence="1">
        <name>pyridoxal 5'-phosphate</name>
        <dbReference type="ChEBI" id="CHEBI:597326"/>
    </cofactor>
    <text evidence="1">Binds 1 pyridoxal phosphate per subunit.</text>
</comment>
<comment type="pathway">
    <text evidence="1">Amino-acid biosynthesis; L-arginine biosynthesis; N(2)-acetyl-L-ornithine from L-glutamate: step 4/4.</text>
</comment>
<comment type="subunit">
    <text evidence="1">Homodimer.</text>
</comment>
<comment type="subcellular location">
    <subcellularLocation>
        <location evidence="1">Cytoplasm</location>
    </subcellularLocation>
</comment>
<comment type="miscellaneous">
    <text evidence="1">May also have succinyldiaminopimelate aminotransferase activity, thus carrying out the corresponding step in lysine biosynthesis.</text>
</comment>
<comment type="similarity">
    <text evidence="1">Belongs to the class-III pyridoxal-phosphate-dependent aminotransferase family. ArgD subfamily.</text>
</comment>
<comment type="sequence caution" evidence="2">
    <conflict type="erroneous initiation">
        <sequence resource="EMBL-CDS" id="AAF21805"/>
    </conflict>
</comment>
<comment type="sequence caution" evidence="2">
    <conflict type="erroneous initiation">
        <sequence resource="EMBL-CDS" id="CAL34382"/>
    </conflict>
</comment>
<gene>
    <name evidence="1" type="primary">argD</name>
    <name type="ordered locus">Cj0227</name>
</gene>
<name>ARGD_CAMJE</name>
<protein>
    <recommendedName>
        <fullName evidence="1">Acetylornithine aminotransferase</fullName>
        <shortName evidence="1">ACOAT</shortName>
        <ecNumber evidence="1">2.6.1.11</ecNumber>
    </recommendedName>
</protein>
<accession>Q9PIR7</accession>
<accession>Q0PBS7</accession>
<accession>Q9RGZ7</accession>
<feature type="chain" id="PRO_0000112736" description="Acetylornithine aminotransferase">
    <location>
        <begin position="1"/>
        <end position="393"/>
    </location>
</feature>
<feature type="binding site" evidence="1">
    <location>
        <begin position="100"/>
        <end position="101"/>
    </location>
    <ligand>
        <name>pyridoxal 5'-phosphate</name>
        <dbReference type="ChEBI" id="CHEBI:597326"/>
    </ligand>
</feature>
<feature type="binding site" evidence="1">
    <location>
        <position position="132"/>
    </location>
    <ligand>
        <name>pyridoxal 5'-phosphate</name>
        <dbReference type="ChEBI" id="CHEBI:597326"/>
    </ligand>
</feature>
<feature type="binding site" evidence="1">
    <location>
        <position position="135"/>
    </location>
    <ligand>
        <name>N(2)-acetyl-L-ornithine</name>
        <dbReference type="ChEBI" id="CHEBI:57805"/>
    </ligand>
</feature>
<feature type="binding site" evidence="1">
    <location>
        <begin position="217"/>
        <end position="220"/>
    </location>
    <ligand>
        <name>pyridoxal 5'-phosphate</name>
        <dbReference type="ChEBI" id="CHEBI:597326"/>
    </ligand>
</feature>
<feature type="binding site" evidence="1">
    <location>
        <position position="275"/>
    </location>
    <ligand>
        <name>N(2)-acetyl-L-ornithine</name>
        <dbReference type="ChEBI" id="CHEBI:57805"/>
    </ligand>
</feature>
<feature type="binding site" evidence="1">
    <location>
        <position position="276"/>
    </location>
    <ligand>
        <name>pyridoxal 5'-phosphate</name>
        <dbReference type="ChEBI" id="CHEBI:597326"/>
    </ligand>
</feature>
<feature type="modified residue" description="N6-(pyridoxal phosphate)lysine" evidence="1">
    <location>
        <position position="246"/>
    </location>
</feature>
<feature type="sequence conflict" description="In Ref. 1; AAF21805." evidence="2" ref="1">
    <original>IPT</original>
    <variation>VPA</variation>
    <location>
        <begin position="10"/>
        <end position="12"/>
    </location>
</feature>
<feature type="sequence conflict" description="In Ref. 1; AAF21805." evidence="2" ref="1">
    <original>V</original>
    <variation>I</variation>
    <location>
        <position position="120"/>
    </location>
</feature>
<feature type="sequence conflict" description="In Ref. 1; AAF21805." evidence="2" ref="1">
    <original>S</original>
    <variation>N</variation>
    <location>
        <position position="341"/>
    </location>
</feature>
<feature type="helix" evidence="3">
    <location>
        <begin position="12"/>
        <end position="14"/>
    </location>
</feature>
<feature type="strand" evidence="3">
    <location>
        <begin position="19"/>
        <end position="25"/>
    </location>
</feature>
<feature type="strand" evidence="3">
    <location>
        <begin position="27"/>
        <end position="30"/>
    </location>
</feature>
<feature type="strand" evidence="3">
    <location>
        <begin position="35"/>
        <end position="40"/>
    </location>
</feature>
<feature type="helix" evidence="3">
    <location>
        <begin position="41"/>
        <end position="44"/>
    </location>
</feature>
<feature type="helix" evidence="3">
    <location>
        <begin position="53"/>
        <end position="63"/>
    </location>
</feature>
<feature type="helix" evidence="3">
    <location>
        <begin position="76"/>
        <end position="89"/>
    </location>
</feature>
<feature type="strand" evidence="3">
    <location>
        <begin position="92"/>
        <end position="99"/>
    </location>
</feature>
<feature type="helix" evidence="3">
    <location>
        <begin position="100"/>
        <end position="117"/>
    </location>
</feature>
<feature type="strand" evidence="3">
    <location>
        <begin position="124"/>
        <end position="128"/>
    </location>
</feature>
<feature type="helix" evidence="3">
    <location>
        <begin position="137"/>
        <end position="140"/>
    </location>
</feature>
<feature type="helix" evidence="3">
    <location>
        <begin position="146"/>
        <end position="149"/>
    </location>
</feature>
<feature type="helix" evidence="3">
    <location>
        <begin position="150"/>
        <end position="152"/>
    </location>
</feature>
<feature type="strand" evidence="3">
    <location>
        <begin position="159"/>
        <end position="162"/>
    </location>
</feature>
<feature type="helix" evidence="3">
    <location>
        <begin position="167"/>
        <end position="171"/>
    </location>
</feature>
<feature type="strand" evidence="3">
    <location>
        <begin position="178"/>
        <end position="187"/>
    </location>
</feature>
<feature type="helix" evidence="3">
    <location>
        <begin position="197"/>
        <end position="210"/>
    </location>
</feature>
<feature type="strand" evidence="3">
    <location>
        <begin position="213"/>
        <end position="217"/>
    </location>
</feature>
<feature type="turn" evidence="3">
    <location>
        <begin position="219"/>
        <end position="226"/>
    </location>
</feature>
<feature type="strand" evidence="3">
    <location>
        <begin position="227"/>
        <end position="230"/>
    </location>
</feature>
<feature type="helix" evidence="3">
    <location>
        <begin position="231"/>
        <end position="235"/>
    </location>
</feature>
<feature type="strand" evidence="3">
    <location>
        <begin position="240"/>
        <end position="244"/>
    </location>
</feature>
<feature type="helix" evidence="3">
    <location>
        <begin position="246"/>
        <end position="248"/>
    </location>
</feature>
<feature type="turn" evidence="3">
    <location>
        <begin position="249"/>
        <end position="251"/>
    </location>
</feature>
<feature type="strand" evidence="3">
    <location>
        <begin position="255"/>
        <end position="259"/>
    </location>
</feature>
<feature type="helix" evidence="3">
    <location>
        <begin position="261"/>
        <end position="267"/>
    </location>
</feature>
<feature type="helix" evidence="3">
    <location>
        <begin position="281"/>
        <end position="296"/>
    </location>
</feature>
<feature type="helix" evidence="3">
    <location>
        <begin position="299"/>
        <end position="320"/>
    </location>
</feature>
<feature type="strand" evidence="3">
    <location>
        <begin position="324"/>
        <end position="330"/>
    </location>
</feature>
<feature type="strand" evidence="3">
    <location>
        <begin position="333"/>
        <end position="338"/>
    </location>
</feature>
<feature type="helix" evidence="3">
    <location>
        <begin position="344"/>
        <end position="353"/>
    </location>
</feature>
<feature type="strand" evidence="3">
    <location>
        <begin position="359"/>
        <end position="361"/>
    </location>
</feature>
<feature type="turn" evidence="3">
    <location>
        <begin position="362"/>
        <end position="364"/>
    </location>
</feature>
<feature type="strand" evidence="3">
    <location>
        <begin position="365"/>
        <end position="368"/>
    </location>
</feature>
<feature type="helix" evidence="3">
    <location>
        <begin position="376"/>
        <end position="391"/>
    </location>
</feature>
<reference key="1">
    <citation type="journal article" date="1999" name="Can. J. Microbiol.">
        <title>Arginine biosynthesis in Campylobacter jejuni TGH9011: determination of the argCOBD cluster.</title>
        <authorList>
            <person name="Hani E.K."/>
            <person name="Ng D."/>
            <person name="Chan V.-L."/>
        </authorList>
    </citation>
    <scope>NUCLEOTIDE SEQUENCE [GENOMIC DNA]</scope>
    <source>
        <strain>ATCC 43431 / TGH 9011 / Serotype O:3</strain>
    </source>
</reference>
<reference key="2">
    <citation type="journal article" date="2000" name="Nature">
        <title>The genome sequence of the food-borne pathogen Campylobacter jejuni reveals hypervariable sequences.</title>
        <authorList>
            <person name="Parkhill J."/>
            <person name="Wren B.W."/>
            <person name="Mungall K.L."/>
            <person name="Ketley J.M."/>
            <person name="Churcher C.M."/>
            <person name="Basham D."/>
            <person name="Chillingworth T."/>
            <person name="Davies R.M."/>
            <person name="Feltwell T."/>
            <person name="Holroyd S."/>
            <person name="Jagels K."/>
            <person name="Karlyshev A.V."/>
            <person name="Moule S."/>
            <person name="Pallen M.J."/>
            <person name="Penn C.W."/>
            <person name="Quail M.A."/>
            <person name="Rajandream M.A."/>
            <person name="Rutherford K.M."/>
            <person name="van Vliet A.H.M."/>
            <person name="Whitehead S."/>
            <person name="Barrell B.G."/>
        </authorList>
    </citation>
    <scope>NUCLEOTIDE SEQUENCE [LARGE SCALE GENOMIC DNA]</scope>
    <source>
        <strain>ATCC 700819 / NCTC 11168</strain>
    </source>
</reference>